<sequence>MLHLKEKLKGTTTVGLVCKEGVVLAADTRASLGNIIYAKNVTKIHKIDEHLAIAGAGDVGDILNLVRLLKAEANLYKSTVGKEMSVKALATLLANILNGSKYFPYLGWFLVGGYDEKPRLFSVDMVGGITEDNYAAAGSGMEFAYSILDSEYREEMSVNDGIKLAVKAINVAIKRDVFTGDGLLVVTITKDGYKEYRGAELEKMLK</sequence>
<organism>
    <name type="scientific">Pyrococcus furiosus (strain ATCC 43587 / DSM 3638 / JCM 8422 / Vc1)</name>
    <dbReference type="NCBI Taxonomy" id="186497"/>
    <lineage>
        <taxon>Archaea</taxon>
        <taxon>Methanobacteriati</taxon>
        <taxon>Methanobacteriota</taxon>
        <taxon>Thermococci</taxon>
        <taxon>Thermococcales</taxon>
        <taxon>Thermococcaceae</taxon>
        <taxon>Pyrococcus</taxon>
    </lineage>
</organism>
<keyword id="KW-0068">Autocatalytic cleavage</keyword>
<keyword id="KW-0963">Cytoplasm</keyword>
<keyword id="KW-0378">Hydrolase</keyword>
<keyword id="KW-0645">Protease</keyword>
<keyword id="KW-0647">Proteasome</keyword>
<keyword id="KW-1185">Reference proteome</keyword>
<keyword id="KW-0888">Threonine protease</keyword>
<keyword id="KW-0865">Zymogen</keyword>
<feature type="propeptide" id="PRO_0000026669" description="Removed in mature form; by autocatalysis" evidence="1">
    <location>
        <begin position="1"/>
        <end position="10"/>
    </location>
</feature>
<feature type="chain" id="PRO_0000026670" description="Proteasome subunit beta 2">
    <location>
        <begin position="11"/>
        <end position="206"/>
    </location>
</feature>
<feature type="active site" description="Nucleophile" evidence="1">
    <location>
        <position position="11"/>
    </location>
</feature>
<name>PSB2_PYRFU</name>
<gene>
    <name evidence="1" type="primary">psmB2</name>
    <name type="ordered locus">PF1404</name>
</gene>
<protein>
    <recommendedName>
        <fullName evidence="1">Proteasome subunit beta 2</fullName>
        <ecNumber evidence="1">3.4.25.1</ecNumber>
    </recommendedName>
    <alternativeName>
        <fullName evidence="1">20S proteasome beta subunit 2</fullName>
    </alternativeName>
    <alternativeName>
        <fullName evidence="1">Proteasome core protein PsmB 2</fullName>
    </alternativeName>
</protein>
<evidence type="ECO:0000255" key="1">
    <source>
        <dbReference type="HAMAP-Rule" id="MF_02113"/>
    </source>
</evidence>
<dbReference type="EC" id="3.4.25.1" evidence="1"/>
<dbReference type="EMBL" id="AE009950">
    <property type="protein sequence ID" value="AAL81528.1"/>
    <property type="molecule type" value="Genomic_DNA"/>
</dbReference>
<dbReference type="SMR" id="Q8U125"/>
<dbReference type="STRING" id="186497.PF1404"/>
<dbReference type="MEROPS" id="T01.002"/>
<dbReference type="PaxDb" id="186497-PF1404"/>
<dbReference type="KEGG" id="pfu:PF1404"/>
<dbReference type="PATRIC" id="fig|186497.12.peg.1467"/>
<dbReference type="eggNOG" id="arCOG00970">
    <property type="taxonomic scope" value="Archaea"/>
</dbReference>
<dbReference type="HOGENOM" id="CLU_035750_7_2_2"/>
<dbReference type="OrthoDB" id="6330at2157"/>
<dbReference type="PhylomeDB" id="Q8U125"/>
<dbReference type="Proteomes" id="UP000001013">
    <property type="component" value="Chromosome"/>
</dbReference>
<dbReference type="GO" id="GO:0005737">
    <property type="term" value="C:cytoplasm"/>
    <property type="evidence" value="ECO:0007669"/>
    <property type="project" value="UniProtKB-SubCell"/>
</dbReference>
<dbReference type="GO" id="GO:0019774">
    <property type="term" value="C:proteasome core complex, beta-subunit complex"/>
    <property type="evidence" value="ECO:0000250"/>
    <property type="project" value="UniProtKB"/>
</dbReference>
<dbReference type="GO" id="GO:0004298">
    <property type="term" value="F:threonine-type endopeptidase activity"/>
    <property type="evidence" value="ECO:0007669"/>
    <property type="project" value="UniProtKB-UniRule"/>
</dbReference>
<dbReference type="GO" id="GO:0010498">
    <property type="term" value="P:proteasomal protein catabolic process"/>
    <property type="evidence" value="ECO:0007669"/>
    <property type="project" value="UniProtKB-UniRule"/>
</dbReference>
<dbReference type="CDD" id="cd03764">
    <property type="entry name" value="proteasome_beta_archeal"/>
    <property type="match status" value="1"/>
</dbReference>
<dbReference type="FunFam" id="3.60.20.10:FF:000049">
    <property type="entry name" value="Proteasome subunit beta"/>
    <property type="match status" value="1"/>
</dbReference>
<dbReference type="Gene3D" id="3.60.20.10">
    <property type="entry name" value="Glutamine Phosphoribosylpyrophosphate, subunit 1, domain 1"/>
    <property type="match status" value="1"/>
</dbReference>
<dbReference type="HAMAP" id="MF_02113_A">
    <property type="entry name" value="Proteasome_B_A"/>
    <property type="match status" value="1"/>
</dbReference>
<dbReference type="InterPro" id="IPR029055">
    <property type="entry name" value="Ntn_hydrolases_N"/>
</dbReference>
<dbReference type="InterPro" id="IPR019983">
    <property type="entry name" value="Pept_T1A_Psome_bsu_arc"/>
</dbReference>
<dbReference type="InterPro" id="IPR000243">
    <property type="entry name" value="Pept_T1A_subB"/>
</dbReference>
<dbReference type="InterPro" id="IPR016050">
    <property type="entry name" value="Proteasome_bsu_CS"/>
</dbReference>
<dbReference type="InterPro" id="IPR001353">
    <property type="entry name" value="Proteasome_sua/b"/>
</dbReference>
<dbReference type="InterPro" id="IPR023333">
    <property type="entry name" value="Proteasome_suB-type"/>
</dbReference>
<dbReference type="NCBIfam" id="TIGR03634">
    <property type="entry name" value="arc_protsome_B"/>
    <property type="match status" value="1"/>
</dbReference>
<dbReference type="PANTHER" id="PTHR32194:SF0">
    <property type="entry name" value="ATP-DEPENDENT PROTEASE SUBUNIT HSLV"/>
    <property type="match status" value="1"/>
</dbReference>
<dbReference type="PANTHER" id="PTHR32194">
    <property type="entry name" value="METALLOPROTEASE TLDD"/>
    <property type="match status" value="1"/>
</dbReference>
<dbReference type="Pfam" id="PF00227">
    <property type="entry name" value="Proteasome"/>
    <property type="match status" value="1"/>
</dbReference>
<dbReference type="PRINTS" id="PR00141">
    <property type="entry name" value="PROTEASOME"/>
</dbReference>
<dbReference type="SUPFAM" id="SSF56235">
    <property type="entry name" value="N-terminal nucleophile aminohydrolases (Ntn hydrolases)"/>
    <property type="match status" value="1"/>
</dbReference>
<dbReference type="PROSITE" id="PS00854">
    <property type="entry name" value="PROTEASOME_BETA_1"/>
    <property type="match status" value="1"/>
</dbReference>
<dbReference type="PROSITE" id="PS51476">
    <property type="entry name" value="PROTEASOME_BETA_2"/>
    <property type="match status" value="1"/>
</dbReference>
<proteinExistence type="inferred from homology"/>
<reference key="1">
    <citation type="journal article" date="1999" name="Genetics">
        <title>Divergence of the hyperthermophilic archaea Pyrococcus furiosus and P. horikoshii inferred from complete genomic sequences.</title>
        <authorList>
            <person name="Maeder D.L."/>
            <person name="Weiss R.B."/>
            <person name="Dunn D.M."/>
            <person name="Cherry J.L."/>
            <person name="Gonzalez J.M."/>
            <person name="DiRuggiero J."/>
            <person name="Robb F.T."/>
        </authorList>
    </citation>
    <scope>NUCLEOTIDE SEQUENCE [LARGE SCALE GENOMIC DNA]</scope>
    <source>
        <strain>ATCC 43587 / DSM 3638 / JCM 8422 / Vc1</strain>
    </source>
</reference>
<accession>Q8U125</accession>
<comment type="function">
    <text evidence="1">Component of the proteasome core, a large protease complex with broad specificity involved in protein degradation.</text>
</comment>
<comment type="catalytic activity">
    <reaction evidence="1">
        <text>Cleavage of peptide bonds with very broad specificity.</text>
        <dbReference type="EC" id="3.4.25.1"/>
    </reaction>
</comment>
<comment type="activity regulation">
    <text evidence="1">The formation of the proteasomal ATPase PAN-20S proteasome complex, via the docking of the C-termini of PAN into the intersubunit pockets in the alpha-rings, triggers opening of the gate for substrate entry. Interconversion between the open-gate and close-gate conformations leads to a dynamic regulation of the 20S proteasome proteolysis activity.</text>
</comment>
<comment type="subunit">
    <text evidence="1">The 20S proteasome core is composed of 14 alpha and 14 beta subunits that assemble into four stacked heptameric rings, resulting in a barrel-shaped structure. The two inner rings, each composed of seven catalytic beta subunits, are sandwiched by two outer rings, each composed of seven alpha subunits. The catalytic chamber with the active sites is on the inside of the barrel. Has a gated structure, the ends of the cylinder being occluded by the N-termini of the alpha-subunits. Is capped at one or both ends by the proteasome regulatory ATPase, PAN.</text>
</comment>
<comment type="subcellular location">
    <subcellularLocation>
        <location evidence="1">Cytoplasm</location>
    </subcellularLocation>
</comment>
<comment type="similarity">
    <text evidence="1">Belongs to the peptidase T1B family.</text>
</comment>